<evidence type="ECO:0000250" key="1"/>
<evidence type="ECO:0000250" key="2">
    <source>
        <dbReference type="UniProtKB" id="Q8BTI9"/>
    </source>
</evidence>
<evidence type="ECO:0000255" key="3">
    <source>
        <dbReference type="PROSITE-ProRule" id="PRU00269"/>
    </source>
</evidence>
<evidence type="ECO:0000255" key="4">
    <source>
        <dbReference type="PROSITE-ProRule" id="PRU00877"/>
    </source>
</evidence>
<evidence type="ECO:0000255" key="5">
    <source>
        <dbReference type="PROSITE-ProRule" id="PRU00878"/>
    </source>
</evidence>
<evidence type="ECO:0000255" key="6">
    <source>
        <dbReference type="PROSITE-ProRule" id="PRU00879"/>
    </source>
</evidence>
<evidence type="ECO:0000255" key="7">
    <source>
        <dbReference type="PROSITE-ProRule" id="PRU00880"/>
    </source>
</evidence>
<evidence type="ECO:0000269" key="8">
    <source>
    </source>
</evidence>
<evidence type="ECO:0000269" key="9">
    <source>
    </source>
</evidence>
<evidence type="ECO:0000269" key="10">
    <source>
    </source>
</evidence>
<evidence type="ECO:0000269" key="11">
    <source>
    </source>
</evidence>
<evidence type="ECO:0000269" key="12">
    <source>
    </source>
</evidence>
<evidence type="ECO:0000269" key="13">
    <source>
    </source>
</evidence>
<evidence type="ECO:0000303" key="14">
    <source>
    </source>
</evidence>
<evidence type="ECO:0000305" key="15">
    <source>
    </source>
</evidence>
<evidence type="ECO:0000305" key="16">
    <source>
    </source>
</evidence>
<keyword id="KW-0067">ATP-binding</keyword>
<keyword id="KW-0072">Autophagy</keyword>
<keyword id="KW-0130">Cell adhesion</keyword>
<keyword id="KW-0963">Cytoplasm</keyword>
<keyword id="KW-0254">Endocytosis</keyword>
<keyword id="KW-0418">Kinase</keyword>
<keyword id="KW-0443">Lipid metabolism</keyword>
<keyword id="KW-0547">Nucleotide-binding</keyword>
<keyword id="KW-0539">Nucleus</keyword>
<keyword id="KW-0597">Phosphoprotein</keyword>
<keyword id="KW-1267">Proteomics identification</keyword>
<keyword id="KW-1185">Reference proteome</keyword>
<keyword id="KW-0808">Transferase</keyword>
<feature type="chain" id="PRO_0000088787" description="Phosphatidylinositol 4,5-bisphosphate 3-kinase catalytic subunit beta isoform">
    <location>
        <begin position="1"/>
        <end position="1070"/>
    </location>
</feature>
<feature type="domain" description="PI3K-ABD" evidence="4">
    <location>
        <begin position="26"/>
        <end position="115"/>
    </location>
</feature>
<feature type="domain" description="PI3K-RBD" evidence="6">
    <location>
        <begin position="194"/>
        <end position="285"/>
    </location>
</feature>
<feature type="domain" description="C2 PI3K-type" evidence="7">
    <location>
        <begin position="327"/>
        <end position="496"/>
    </location>
</feature>
<feature type="domain" description="PIK helical" evidence="5">
    <location>
        <begin position="524"/>
        <end position="701"/>
    </location>
</feature>
<feature type="domain" description="PI3K/PI4K catalytic" evidence="3">
    <location>
        <begin position="772"/>
        <end position="1053"/>
    </location>
</feature>
<feature type="region of interest" description="G-loop" evidence="3">
    <location>
        <begin position="778"/>
        <end position="784"/>
    </location>
</feature>
<feature type="region of interest" description="Catalytic loop" evidence="3">
    <location>
        <begin position="916"/>
        <end position="924"/>
    </location>
</feature>
<feature type="region of interest" description="Activation loop" evidence="3">
    <location>
        <begin position="935"/>
        <end position="961"/>
    </location>
</feature>
<feature type="short sequence motif" description="Nuclear localization signal">
    <location>
        <begin position="410"/>
        <end position="418"/>
    </location>
</feature>
<feature type="modified residue" description="Phosphoserine" evidence="2">
    <location>
        <position position="324"/>
    </location>
</feature>
<feature type="modified residue" description="Phosphoserine; by autocatalysis" evidence="8">
    <location>
        <position position="1070"/>
    </location>
</feature>
<feature type="sequence variant" id="VAR_050530" description="In dbSNP:rs2230462.">
    <original>Q</original>
    <variation>H</variation>
    <location>
        <position position="672"/>
    </location>
</feature>
<feature type="mutagenesis site" description="Enhanced inhibition by PIK3R1 leading to reduced lipid kinase activity and reduced oncogenicity. Does not modify regulation by GPCRs." evidence="12">
    <original>K</original>
    <variation>N</variation>
    <location>
        <position position="342"/>
    </location>
</feature>
<feature type="mutagenesis site" description="Loss of lipid kinase activity. May not affect insulin signaling and cell proliferation. Partially affects oncogene-induced transformation." evidence="10">
    <original>K</original>
    <variation>R</variation>
    <location>
        <position position="805"/>
    </location>
</feature>
<feature type="mutagenesis site" description="Loss of autophosphorylation. No effect on phosphatidylinositol-4,5-bisphosphate 3-kinase activity." evidence="8">
    <original>S</original>
    <variation>A</variation>
    <location>
        <position position="1070"/>
    </location>
</feature>
<feature type="mutagenesis site" description="Loss of autophosphorylation. Decreased basal and stimulated phosphatidylinositol-4,5-bisphosphate 3-kinase activity." evidence="8">
    <original>S</original>
    <variation>D</variation>
    <variation>E</variation>
    <location>
        <position position="1070"/>
    </location>
</feature>
<dbReference type="EC" id="2.7.1.153" evidence="8 9"/>
<dbReference type="EC" id="2.7.11.1" evidence="8"/>
<dbReference type="EMBL" id="S67334">
    <property type="protein sequence ID" value="AAB29081.1"/>
    <property type="molecule type" value="mRNA"/>
</dbReference>
<dbReference type="EMBL" id="AJ297549">
    <property type="protein sequence ID" value="CAC21449.1"/>
    <property type="molecule type" value="Genomic_DNA"/>
</dbReference>
<dbReference type="EMBL" id="AJ297550">
    <property type="protein sequence ID" value="CAC21449.1"/>
    <property type="status" value="JOINED"/>
    <property type="molecule type" value="Genomic_DNA"/>
</dbReference>
<dbReference type="EMBL" id="AJ297551">
    <property type="protein sequence ID" value="CAC21449.1"/>
    <property type="status" value="JOINED"/>
    <property type="molecule type" value="Genomic_DNA"/>
</dbReference>
<dbReference type="EMBL" id="AJ297552">
    <property type="protein sequence ID" value="CAC21449.1"/>
    <property type="status" value="JOINED"/>
    <property type="molecule type" value="Genomic_DNA"/>
</dbReference>
<dbReference type="EMBL" id="AJ297553">
    <property type="protein sequence ID" value="CAC21449.1"/>
    <property type="status" value="JOINED"/>
    <property type="molecule type" value="Genomic_DNA"/>
</dbReference>
<dbReference type="EMBL" id="AJ297554">
    <property type="protein sequence ID" value="CAC21449.1"/>
    <property type="status" value="JOINED"/>
    <property type="molecule type" value="Genomic_DNA"/>
</dbReference>
<dbReference type="EMBL" id="AJ297555">
    <property type="protein sequence ID" value="CAC21449.1"/>
    <property type="status" value="JOINED"/>
    <property type="molecule type" value="Genomic_DNA"/>
</dbReference>
<dbReference type="EMBL" id="AJ297556">
    <property type="protein sequence ID" value="CAC21449.1"/>
    <property type="status" value="JOINED"/>
    <property type="molecule type" value="Genomic_DNA"/>
</dbReference>
<dbReference type="EMBL" id="AJ297557">
    <property type="protein sequence ID" value="CAC21449.1"/>
    <property type="status" value="JOINED"/>
    <property type="molecule type" value="Genomic_DNA"/>
</dbReference>
<dbReference type="EMBL" id="AJ297558">
    <property type="protein sequence ID" value="CAC21449.1"/>
    <property type="status" value="JOINED"/>
    <property type="molecule type" value="Genomic_DNA"/>
</dbReference>
<dbReference type="EMBL" id="AJ297559">
    <property type="protein sequence ID" value="CAC21449.1"/>
    <property type="status" value="JOINED"/>
    <property type="molecule type" value="Genomic_DNA"/>
</dbReference>
<dbReference type="EMBL" id="AJ297560">
    <property type="protein sequence ID" value="CAC21449.1"/>
    <property type="status" value="JOINED"/>
    <property type="molecule type" value="Genomic_DNA"/>
</dbReference>
<dbReference type="EMBL" id="CH471052">
    <property type="protein sequence ID" value="EAW79053.1"/>
    <property type="molecule type" value="Genomic_DNA"/>
</dbReference>
<dbReference type="EMBL" id="CH471052">
    <property type="protein sequence ID" value="EAW79055.1"/>
    <property type="molecule type" value="Genomic_DNA"/>
</dbReference>
<dbReference type="EMBL" id="BC114432">
    <property type="protein sequence ID" value="AAI14433.1"/>
    <property type="molecule type" value="mRNA"/>
</dbReference>
<dbReference type="CCDS" id="CCDS3104.1"/>
<dbReference type="PIR" id="A54600">
    <property type="entry name" value="A54600"/>
</dbReference>
<dbReference type="RefSeq" id="NP_006210.1">
    <property type="nucleotide sequence ID" value="NM_006219.3"/>
</dbReference>
<dbReference type="RefSeq" id="XP_005247587.1">
    <property type="nucleotide sequence ID" value="XM_005247530.2"/>
</dbReference>
<dbReference type="RefSeq" id="XP_006713722.1">
    <property type="nucleotide sequence ID" value="XM_006713659.4"/>
</dbReference>
<dbReference type="RefSeq" id="XP_011511197.1">
    <property type="nucleotide sequence ID" value="XM_011512895.3"/>
</dbReference>
<dbReference type="RefSeq" id="XP_016862108.1">
    <property type="nucleotide sequence ID" value="XM_017006619.2"/>
</dbReference>
<dbReference type="RefSeq" id="XP_047304263.1">
    <property type="nucleotide sequence ID" value="XM_047448307.1"/>
</dbReference>
<dbReference type="RefSeq" id="XP_047304264.1">
    <property type="nucleotide sequence ID" value="XM_047448308.1"/>
</dbReference>
<dbReference type="RefSeq" id="XP_047304265.1">
    <property type="nucleotide sequence ID" value="XM_047448309.1"/>
</dbReference>
<dbReference type="RefSeq" id="XP_047304266.1">
    <property type="nucleotide sequence ID" value="XM_047448310.1"/>
</dbReference>
<dbReference type="RefSeq" id="XP_054202824.1">
    <property type="nucleotide sequence ID" value="XM_054346849.1"/>
</dbReference>
<dbReference type="RefSeq" id="XP_054202825.1">
    <property type="nucleotide sequence ID" value="XM_054346850.1"/>
</dbReference>
<dbReference type="RefSeq" id="XP_054202826.1">
    <property type="nucleotide sequence ID" value="XM_054346851.1"/>
</dbReference>
<dbReference type="RefSeq" id="XP_054202827.1">
    <property type="nucleotide sequence ID" value="XM_054346852.1"/>
</dbReference>
<dbReference type="RefSeq" id="XP_054202828.1">
    <property type="nucleotide sequence ID" value="XM_054346853.1"/>
</dbReference>
<dbReference type="SMR" id="P42338"/>
<dbReference type="BioGRID" id="111309">
    <property type="interactions" value="89"/>
</dbReference>
<dbReference type="ComplexPortal" id="CPX-5972">
    <property type="entry name" value="Phosphatidylinositol 3-kinase complex class IA, p110beta/p50alpha"/>
</dbReference>
<dbReference type="ComplexPortal" id="CPX-5974">
    <property type="entry name" value="Phosphatidylinositol 3-kinase complex class IA, p110beta/p55alpha"/>
</dbReference>
<dbReference type="ComplexPortal" id="CPX-5975">
    <property type="entry name" value="Phosphatidylinositol 3-kinase complex class IA, p110beta/p85alpha"/>
</dbReference>
<dbReference type="ComplexPortal" id="CPX-5976">
    <property type="entry name" value="Phosphatidylinositol 3-kinase complex class IA, p110beta/p85beta"/>
</dbReference>
<dbReference type="ComplexPortal" id="CPX-5977">
    <property type="entry name" value="Phosphatidylinositol 3-kinase complex class IA, p110beta/p55gamma"/>
</dbReference>
<dbReference type="CORUM" id="P42338"/>
<dbReference type="DIP" id="DIP-44775N"/>
<dbReference type="FunCoup" id="P42338">
    <property type="interactions" value="4060"/>
</dbReference>
<dbReference type="IntAct" id="P42338">
    <property type="interactions" value="71"/>
</dbReference>
<dbReference type="MINT" id="P42338"/>
<dbReference type="STRING" id="9606.ENSP00000501150"/>
<dbReference type="BindingDB" id="P42338"/>
<dbReference type="ChEMBL" id="CHEMBL3145"/>
<dbReference type="DrugBank" id="DB14980">
    <property type="generic name" value="AZD-6482"/>
</dbReference>
<dbReference type="DrugBank" id="DB15029">
    <property type="generic name" value="AZD-8186"/>
</dbReference>
<dbReference type="DrugBank" id="DB14846">
    <property type="generic name" value="Bimiralisib"/>
</dbReference>
<dbReference type="DrugBank" id="DB11666">
    <property type="generic name" value="Buparlisib"/>
</dbReference>
<dbReference type="DrugBank" id="DB00201">
    <property type="generic name" value="Caffeine"/>
</dbReference>
<dbReference type="DrugBank" id="DB13051">
    <property type="generic name" value="CH-5132799"/>
</dbReference>
<dbReference type="DrugBank" id="DB12483">
    <property type="generic name" value="Copanlisib"/>
</dbReference>
<dbReference type="DrugBank" id="DB11795">
    <property type="generic name" value="GSK-2636771"/>
</dbReference>
<dbReference type="DrugBank" id="DB17047">
    <property type="generic name" value="PIK-75"/>
</dbReference>
<dbReference type="DrugBank" id="DB08052">
    <property type="generic name" value="PP-121"/>
</dbReference>
<dbReference type="DrugBank" id="DB05241">
    <property type="generic name" value="XL765"/>
</dbReference>
<dbReference type="DrugCentral" id="P42338"/>
<dbReference type="GuidetoPHARMACOLOGY" id="2154"/>
<dbReference type="CarbonylDB" id="P42338"/>
<dbReference type="GlyGen" id="P42338">
    <property type="glycosylation" value="3 sites, 1 O-linked glycan (3 sites)"/>
</dbReference>
<dbReference type="iPTMnet" id="P42338"/>
<dbReference type="PhosphoSitePlus" id="P42338"/>
<dbReference type="BioMuta" id="PIK3CB"/>
<dbReference type="DMDM" id="1171955"/>
<dbReference type="CPTAC" id="CPTAC-3130"/>
<dbReference type="CPTAC" id="CPTAC-3131"/>
<dbReference type="CPTAC" id="CPTAC-3132"/>
<dbReference type="jPOST" id="P42338"/>
<dbReference type="MassIVE" id="P42338"/>
<dbReference type="PaxDb" id="9606-ENSP00000289153"/>
<dbReference type="PeptideAtlas" id="P42338"/>
<dbReference type="ProteomicsDB" id="55510"/>
<dbReference type="Pumba" id="P42338"/>
<dbReference type="Antibodypedia" id="33450">
    <property type="antibodies" value="541 antibodies from 41 providers"/>
</dbReference>
<dbReference type="DNASU" id="5291"/>
<dbReference type="Ensembl" id="ENST00000289153.6">
    <property type="protein sequence ID" value="ENSP00000289153.2"/>
    <property type="gene ID" value="ENSG00000051382.10"/>
</dbReference>
<dbReference type="Ensembl" id="ENST00000477593.6">
    <property type="protein sequence ID" value="ENSP00000418143.1"/>
    <property type="gene ID" value="ENSG00000051382.10"/>
</dbReference>
<dbReference type="Ensembl" id="ENST00000674063.1">
    <property type="protein sequence ID" value="ENSP00000501150.1"/>
    <property type="gene ID" value="ENSG00000051382.10"/>
</dbReference>
<dbReference type="GeneID" id="5291"/>
<dbReference type="KEGG" id="hsa:5291"/>
<dbReference type="MANE-Select" id="ENST00000674063.1">
    <property type="protein sequence ID" value="ENSP00000501150.1"/>
    <property type="RefSeq nucleotide sequence ID" value="NM_006219.3"/>
    <property type="RefSeq protein sequence ID" value="NP_006210.1"/>
</dbReference>
<dbReference type="UCSC" id="uc011bmq.4">
    <property type="organism name" value="human"/>
</dbReference>
<dbReference type="AGR" id="HGNC:8976"/>
<dbReference type="CTD" id="5291"/>
<dbReference type="DisGeNET" id="5291"/>
<dbReference type="GeneCards" id="PIK3CB"/>
<dbReference type="HGNC" id="HGNC:8976">
    <property type="gene designation" value="PIK3CB"/>
</dbReference>
<dbReference type="HPA" id="ENSG00000051382">
    <property type="expression patterns" value="Low tissue specificity"/>
</dbReference>
<dbReference type="MalaCards" id="PIK3CB"/>
<dbReference type="MIM" id="602925">
    <property type="type" value="gene"/>
</dbReference>
<dbReference type="neXtProt" id="NX_P42338"/>
<dbReference type="OpenTargets" id="ENSG00000051382"/>
<dbReference type="PharmGKB" id="PA33309"/>
<dbReference type="VEuPathDB" id="HostDB:ENSG00000051382"/>
<dbReference type="eggNOG" id="KOG0904">
    <property type="taxonomic scope" value="Eukaryota"/>
</dbReference>
<dbReference type="GeneTree" id="ENSGT00940000157522"/>
<dbReference type="HOGENOM" id="CLU_002191_1_3_1"/>
<dbReference type="InParanoid" id="P42338"/>
<dbReference type="OMA" id="KGCKQHV"/>
<dbReference type="OrthoDB" id="67688at2759"/>
<dbReference type="PAN-GO" id="P42338">
    <property type="GO annotations" value="8 GO annotations based on evolutionary models"/>
</dbReference>
<dbReference type="PhylomeDB" id="P42338"/>
<dbReference type="TreeFam" id="TF102031"/>
<dbReference type="BioCyc" id="MetaCyc:HS00644-MONOMER"/>
<dbReference type="BRENDA" id="2.7.1.137">
    <property type="organism ID" value="2681"/>
</dbReference>
<dbReference type="BRENDA" id="2.7.1.153">
    <property type="organism ID" value="2681"/>
</dbReference>
<dbReference type="PathwayCommons" id="P42338"/>
<dbReference type="Reactome" id="R-HSA-109704">
    <property type="pathway name" value="PI3K Cascade"/>
</dbReference>
<dbReference type="Reactome" id="R-HSA-112399">
    <property type="pathway name" value="IRS-mediated signalling"/>
</dbReference>
<dbReference type="Reactome" id="R-HSA-114604">
    <property type="pathway name" value="GPVI-mediated activation cascade"/>
</dbReference>
<dbReference type="Reactome" id="R-HSA-1257604">
    <property type="pathway name" value="PIP3 activates AKT signaling"/>
</dbReference>
<dbReference type="Reactome" id="R-HSA-1660499">
    <property type="pathway name" value="Synthesis of PIPs at the plasma membrane"/>
</dbReference>
<dbReference type="Reactome" id="R-HSA-186763">
    <property type="pathway name" value="Downstream signal transduction"/>
</dbReference>
<dbReference type="Reactome" id="R-HSA-198203">
    <property type="pathway name" value="PI3K/AKT activation"/>
</dbReference>
<dbReference type="Reactome" id="R-HSA-201556">
    <property type="pathway name" value="Signaling by ALK"/>
</dbReference>
<dbReference type="Reactome" id="R-HSA-202424">
    <property type="pathway name" value="Downstream TCR signaling"/>
</dbReference>
<dbReference type="Reactome" id="R-HSA-2029485">
    <property type="pathway name" value="Role of phospholipids in phagocytosis"/>
</dbReference>
<dbReference type="Reactome" id="R-HSA-210993">
    <property type="pathway name" value="Tie2 Signaling"/>
</dbReference>
<dbReference type="Reactome" id="R-HSA-2219530">
    <property type="pathway name" value="Constitutive Signaling by Aberrant PI3K in Cancer"/>
</dbReference>
<dbReference type="Reactome" id="R-HSA-2424491">
    <property type="pathway name" value="DAP12 signaling"/>
</dbReference>
<dbReference type="Reactome" id="R-HSA-2730905">
    <property type="pathway name" value="Role of LAT2/NTAL/LAB on calcium mobilization"/>
</dbReference>
<dbReference type="Reactome" id="R-HSA-373753">
    <property type="pathway name" value="Nephrin family interactions"/>
</dbReference>
<dbReference type="Reactome" id="R-HSA-389357">
    <property type="pathway name" value="CD28 dependent PI3K/Akt signaling"/>
</dbReference>
<dbReference type="Reactome" id="R-HSA-4420097">
    <property type="pathway name" value="VEGFA-VEGFR2 Pathway"/>
</dbReference>
<dbReference type="Reactome" id="R-HSA-512988">
    <property type="pathway name" value="Interleukin-3, Interleukin-5 and GM-CSF signaling"/>
</dbReference>
<dbReference type="Reactome" id="R-HSA-5673001">
    <property type="pathway name" value="RAF/MAP kinase cascade"/>
</dbReference>
<dbReference type="Reactome" id="R-HSA-6811558">
    <property type="pathway name" value="PI5P, PP2A and IER3 Regulate PI3K/AKT Signaling"/>
</dbReference>
<dbReference type="Reactome" id="R-HSA-8853659">
    <property type="pathway name" value="RET signaling"/>
</dbReference>
<dbReference type="Reactome" id="R-HSA-9027276">
    <property type="pathway name" value="Erythropoietin activates Phosphoinositide-3-kinase (PI3K)"/>
</dbReference>
<dbReference type="Reactome" id="R-HSA-912526">
    <property type="pathway name" value="Interleukin receptor SHC signaling"/>
</dbReference>
<dbReference type="Reactome" id="R-HSA-912631">
    <property type="pathway name" value="Regulation of signaling by CBL"/>
</dbReference>
<dbReference type="Reactome" id="R-HSA-9673767">
    <property type="pathway name" value="Signaling by PDGFRA transmembrane, juxtamembrane and kinase domain mutants"/>
</dbReference>
<dbReference type="Reactome" id="R-HSA-9673770">
    <property type="pathway name" value="Signaling by PDGFRA extracellular domain mutants"/>
</dbReference>
<dbReference type="Reactome" id="R-HSA-9680350">
    <property type="pathway name" value="Signaling by CSF1 (M-CSF) in myeloid cells"/>
</dbReference>
<dbReference type="Reactome" id="R-HSA-9725370">
    <property type="pathway name" value="Signaling by ALK fusions and activated point mutants"/>
</dbReference>
<dbReference type="Reactome" id="R-HSA-9842640">
    <property type="pathway name" value="Signaling by LTK in cancer"/>
</dbReference>
<dbReference type="Reactome" id="R-HSA-9842663">
    <property type="pathway name" value="Signaling by LTK"/>
</dbReference>
<dbReference type="Reactome" id="R-HSA-9856530">
    <property type="pathway name" value="High laminar flow shear stress activates signaling by PIEZO1 and PECAM1:CDH5:KDR in endothelial cells"/>
</dbReference>
<dbReference type="Reactome" id="R-HSA-9927354">
    <property type="pathway name" value="Co-stimulation by ICOS"/>
</dbReference>
<dbReference type="SignaLink" id="P42338"/>
<dbReference type="SIGNOR" id="P42338"/>
<dbReference type="UniPathway" id="UPA00220"/>
<dbReference type="BioGRID-ORCS" id="5291">
    <property type="hits" value="66 hits in 1181 CRISPR screens"/>
</dbReference>
<dbReference type="ChiTaRS" id="PIK3CB">
    <property type="organism name" value="human"/>
</dbReference>
<dbReference type="GeneWiki" id="PIK3CB"/>
<dbReference type="GenomeRNAi" id="5291"/>
<dbReference type="Pharos" id="P42338">
    <property type="development level" value="Tchem"/>
</dbReference>
<dbReference type="PRO" id="PR:P42338"/>
<dbReference type="Proteomes" id="UP000005640">
    <property type="component" value="Chromosome 3"/>
</dbReference>
<dbReference type="RNAct" id="P42338">
    <property type="molecule type" value="protein"/>
</dbReference>
<dbReference type="Bgee" id="ENSG00000051382">
    <property type="expression patterns" value="Expressed in tendon of biceps brachii and 206 other cell types or tissues"/>
</dbReference>
<dbReference type="ExpressionAtlas" id="P42338">
    <property type="expression patterns" value="baseline and differential"/>
</dbReference>
<dbReference type="GO" id="GO:0005737">
    <property type="term" value="C:cytoplasm"/>
    <property type="evidence" value="ECO:0000314"/>
    <property type="project" value="UniProt"/>
</dbReference>
<dbReference type="GO" id="GO:0005829">
    <property type="term" value="C:cytosol"/>
    <property type="evidence" value="ECO:0000304"/>
    <property type="project" value="Reactome"/>
</dbReference>
<dbReference type="GO" id="GO:0043231">
    <property type="term" value="C:intracellular membrane-bounded organelle"/>
    <property type="evidence" value="ECO:0000314"/>
    <property type="project" value="HPA"/>
</dbReference>
<dbReference type="GO" id="GO:0030496">
    <property type="term" value="C:midbody"/>
    <property type="evidence" value="ECO:0000314"/>
    <property type="project" value="HPA"/>
</dbReference>
<dbReference type="GO" id="GO:0005730">
    <property type="term" value="C:nucleolus"/>
    <property type="evidence" value="ECO:0000314"/>
    <property type="project" value="HPA"/>
</dbReference>
<dbReference type="GO" id="GO:0005654">
    <property type="term" value="C:nucleoplasm"/>
    <property type="evidence" value="ECO:0000314"/>
    <property type="project" value="HPA"/>
</dbReference>
<dbReference type="GO" id="GO:0005634">
    <property type="term" value="C:nucleus"/>
    <property type="evidence" value="ECO:0000314"/>
    <property type="project" value="BHF-UCL"/>
</dbReference>
<dbReference type="GO" id="GO:0005942">
    <property type="term" value="C:phosphatidylinositol 3-kinase complex"/>
    <property type="evidence" value="ECO:0000318"/>
    <property type="project" value="GO_Central"/>
</dbReference>
<dbReference type="GO" id="GO:0005943">
    <property type="term" value="C:phosphatidylinositol 3-kinase complex, class IA"/>
    <property type="evidence" value="ECO:0000353"/>
    <property type="project" value="ComplexPortal"/>
</dbReference>
<dbReference type="GO" id="GO:0005886">
    <property type="term" value="C:plasma membrane"/>
    <property type="evidence" value="ECO:0000318"/>
    <property type="project" value="GO_Central"/>
</dbReference>
<dbReference type="GO" id="GO:0016303">
    <property type="term" value="F:1-phosphatidylinositol-3-kinase activity"/>
    <property type="evidence" value="ECO:0000318"/>
    <property type="project" value="GO_Central"/>
</dbReference>
<dbReference type="GO" id="GO:0046934">
    <property type="term" value="F:1-phosphatidylinositol-4,5-bisphosphate 3-kinase activity"/>
    <property type="evidence" value="ECO:0000314"/>
    <property type="project" value="UniProtKB"/>
</dbReference>
<dbReference type="GO" id="GO:0035005">
    <property type="term" value="F:1-phosphatidylinositol-4-phosphate 3-kinase activity"/>
    <property type="evidence" value="ECO:0000318"/>
    <property type="project" value="GO_Central"/>
</dbReference>
<dbReference type="GO" id="GO:0005524">
    <property type="term" value="F:ATP binding"/>
    <property type="evidence" value="ECO:0007669"/>
    <property type="project" value="UniProtKB-KW"/>
</dbReference>
<dbReference type="GO" id="GO:0043560">
    <property type="term" value="F:insulin receptor substrate binding"/>
    <property type="evidence" value="ECO:0007669"/>
    <property type="project" value="Ensembl"/>
</dbReference>
<dbReference type="GO" id="GO:0106310">
    <property type="term" value="F:protein serine kinase activity"/>
    <property type="evidence" value="ECO:0000314"/>
    <property type="project" value="UniProtKB"/>
</dbReference>
<dbReference type="GO" id="GO:0060055">
    <property type="term" value="P:angiogenesis involved in wound healing"/>
    <property type="evidence" value="ECO:0007669"/>
    <property type="project" value="Ensembl"/>
</dbReference>
<dbReference type="GO" id="GO:0006914">
    <property type="term" value="P:autophagy"/>
    <property type="evidence" value="ECO:0007669"/>
    <property type="project" value="UniProtKB-KW"/>
</dbReference>
<dbReference type="GO" id="GO:0016477">
    <property type="term" value="P:cell migration"/>
    <property type="evidence" value="ECO:0000318"/>
    <property type="project" value="GO_Central"/>
</dbReference>
<dbReference type="GO" id="GO:0007169">
    <property type="term" value="P:cell surface receptor protein tyrosine kinase signaling pathway"/>
    <property type="evidence" value="ECO:0000304"/>
    <property type="project" value="UniProtKB"/>
</dbReference>
<dbReference type="GO" id="GO:0006935">
    <property type="term" value="P:chemotaxis"/>
    <property type="evidence" value="ECO:0000304"/>
    <property type="project" value="ProtInc"/>
</dbReference>
<dbReference type="GO" id="GO:0040016">
    <property type="term" value="P:embryonic cleavage"/>
    <property type="evidence" value="ECO:0007669"/>
    <property type="project" value="Ensembl"/>
</dbReference>
<dbReference type="GO" id="GO:0006897">
    <property type="term" value="P:endocytosis"/>
    <property type="evidence" value="ECO:0007669"/>
    <property type="project" value="UniProtKB-KW"/>
</dbReference>
<dbReference type="GO" id="GO:0001935">
    <property type="term" value="P:endothelial cell proliferation"/>
    <property type="evidence" value="ECO:0007669"/>
    <property type="project" value="Ensembl"/>
</dbReference>
<dbReference type="GO" id="GO:0007186">
    <property type="term" value="P:G protein-coupled receptor signaling pathway"/>
    <property type="evidence" value="ECO:0000304"/>
    <property type="project" value="UniProtKB"/>
</dbReference>
<dbReference type="GO" id="GO:0007156">
    <property type="term" value="P:homophilic cell adhesion via plasma membrane adhesion molecules"/>
    <property type="evidence" value="ECO:0007669"/>
    <property type="project" value="Ensembl"/>
</dbReference>
<dbReference type="GO" id="GO:0006874">
    <property type="term" value="P:intracellular calcium ion homeostasis"/>
    <property type="evidence" value="ECO:0007669"/>
    <property type="project" value="Ensembl"/>
</dbReference>
<dbReference type="GO" id="GO:0042267">
    <property type="term" value="P:natural killer cell mediated cytotoxicity"/>
    <property type="evidence" value="ECO:0000314"/>
    <property type="project" value="UniProt"/>
</dbReference>
<dbReference type="GO" id="GO:1903298">
    <property type="term" value="P:negative regulation of hypoxia-induced intrinsic apoptotic signaling pathway"/>
    <property type="evidence" value="ECO:0007669"/>
    <property type="project" value="Ensembl"/>
</dbReference>
<dbReference type="GO" id="GO:0043409">
    <property type="term" value="P:negative regulation of MAPK cascade"/>
    <property type="evidence" value="ECO:0000250"/>
    <property type="project" value="BHF-UCL"/>
</dbReference>
<dbReference type="GO" id="GO:0051898">
    <property type="term" value="P:negative regulation of phosphatidylinositol 3-kinase/protein kinase B signal transduction"/>
    <property type="evidence" value="ECO:0000316"/>
    <property type="project" value="BHF-UCL"/>
</dbReference>
<dbReference type="GO" id="GO:1903671">
    <property type="term" value="P:negative regulation of sprouting angiogenesis"/>
    <property type="evidence" value="ECO:0000315"/>
    <property type="project" value="BHF-UCL"/>
</dbReference>
<dbReference type="GO" id="GO:1900747">
    <property type="term" value="P:negative regulation of vascular endothelial growth factor signaling pathway"/>
    <property type="evidence" value="ECO:0000316"/>
    <property type="project" value="BHF-UCL"/>
</dbReference>
<dbReference type="GO" id="GO:0043491">
    <property type="term" value="P:phosphatidylinositol 3-kinase/protein kinase B signal transduction"/>
    <property type="evidence" value="ECO:0000315"/>
    <property type="project" value="BHF-UCL"/>
</dbReference>
<dbReference type="GO" id="GO:0046854">
    <property type="term" value="P:phosphatidylinositol phosphate biosynthetic process"/>
    <property type="evidence" value="ECO:0000314"/>
    <property type="project" value="UniProtKB"/>
</dbReference>
<dbReference type="GO" id="GO:0036092">
    <property type="term" value="P:phosphatidylinositol-3-phosphate biosynthetic process"/>
    <property type="evidence" value="ECO:0000318"/>
    <property type="project" value="GO_Central"/>
</dbReference>
<dbReference type="GO" id="GO:0048015">
    <property type="term" value="P:phosphatidylinositol-mediated signaling"/>
    <property type="evidence" value="ECO:0000318"/>
    <property type="project" value="GO_Central"/>
</dbReference>
<dbReference type="GO" id="GO:0030168">
    <property type="term" value="P:platelet activation"/>
    <property type="evidence" value="ECO:0000304"/>
    <property type="project" value="UniProtKB"/>
</dbReference>
<dbReference type="GO" id="GO:0070527">
    <property type="term" value="P:platelet aggregation"/>
    <property type="evidence" value="ECO:0000304"/>
    <property type="project" value="UniProtKB"/>
</dbReference>
<dbReference type="GO" id="GO:0010508">
    <property type="term" value="P:positive regulation of autophagy"/>
    <property type="evidence" value="ECO:0000304"/>
    <property type="project" value="UniProtKB"/>
</dbReference>
<dbReference type="GO" id="GO:0010595">
    <property type="term" value="P:positive regulation of endothelial cell migration"/>
    <property type="evidence" value="ECO:0000316"/>
    <property type="project" value="BHF-UCL"/>
</dbReference>
<dbReference type="GO" id="GO:0010628">
    <property type="term" value="P:positive regulation of gene expression"/>
    <property type="evidence" value="ECO:0000315"/>
    <property type="project" value="MGI"/>
</dbReference>
<dbReference type="GO" id="GO:0033031">
    <property type="term" value="P:positive regulation of neutrophil apoptotic process"/>
    <property type="evidence" value="ECO:0000315"/>
    <property type="project" value="CAFA"/>
</dbReference>
<dbReference type="GO" id="GO:0045429">
    <property type="term" value="P:positive regulation of nitric oxide biosynthetic process"/>
    <property type="evidence" value="ECO:0000315"/>
    <property type="project" value="BHF-UCL"/>
</dbReference>
<dbReference type="GO" id="GO:0035022">
    <property type="term" value="P:positive regulation of Rac protein signal transduction"/>
    <property type="evidence" value="ECO:0000316"/>
    <property type="project" value="BHF-UCL"/>
</dbReference>
<dbReference type="GO" id="GO:0001952">
    <property type="term" value="P:regulation of cell-matrix adhesion"/>
    <property type="evidence" value="ECO:0000315"/>
    <property type="project" value="MGI"/>
</dbReference>
<dbReference type="GO" id="GO:2000369">
    <property type="term" value="P:regulation of clathrin-dependent endocytosis"/>
    <property type="evidence" value="ECO:0000304"/>
    <property type="project" value="UniProtKB"/>
</dbReference>
<dbReference type="GO" id="GO:0002931">
    <property type="term" value="P:response to ischemia"/>
    <property type="evidence" value="ECO:0000250"/>
    <property type="project" value="BHF-UCL"/>
</dbReference>
<dbReference type="GO" id="GO:0007165">
    <property type="term" value="P:signal transduction"/>
    <property type="evidence" value="ECO:0000303"/>
    <property type="project" value="ProtInc"/>
</dbReference>
<dbReference type="GO" id="GO:0003376">
    <property type="term" value="P:sphingosine-1-phosphate receptor signaling pathway"/>
    <property type="evidence" value="ECO:0000315"/>
    <property type="project" value="BHF-UCL"/>
</dbReference>
<dbReference type="CDD" id="cd08693">
    <property type="entry name" value="C2_PI3K_class_I_beta_delta"/>
    <property type="match status" value="1"/>
</dbReference>
<dbReference type="CDD" id="cd00872">
    <property type="entry name" value="PI3Ka_I"/>
    <property type="match status" value="1"/>
</dbReference>
<dbReference type="CDD" id="cd05173">
    <property type="entry name" value="PI3Kc_IA_beta"/>
    <property type="match status" value="1"/>
</dbReference>
<dbReference type="FunFam" id="1.10.1070.11:FF:000001">
    <property type="entry name" value="Phosphatidylinositol 4,5-bisphosphate 3-kinase catalytic subunit"/>
    <property type="match status" value="1"/>
</dbReference>
<dbReference type="FunFam" id="2.60.40.150:FF:000046">
    <property type="entry name" value="Phosphatidylinositol 4,5-bisphosphate 3-kinase catalytic subunit"/>
    <property type="match status" value="1"/>
</dbReference>
<dbReference type="FunFam" id="1.25.40.70:FF:000004">
    <property type="entry name" value="Phosphatidylinositol 4,5-bisphosphate 3-kinase catalytic subunit beta"/>
    <property type="match status" value="1"/>
</dbReference>
<dbReference type="FunFam" id="3.30.1010.10:FF:000005">
    <property type="entry name" value="Phosphatidylinositol 4,5-bisphosphate 3-kinase catalytic subunit beta"/>
    <property type="match status" value="1"/>
</dbReference>
<dbReference type="FunFam" id="3.10.20.770:FF:000003">
    <property type="entry name" value="phosphatidylinositol 4,5-bisphosphate 3-kinase catalytic subunit beta isoform"/>
    <property type="match status" value="1"/>
</dbReference>
<dbReference type="Gene3D" id="3.10.20.770">
    <property type="match status" value="1"/>
</dbReference>
<dbReference type="Gene3D" id="2.60.40.150">
    <property type="entry name" value="C2 domain"/>
    <property type="match status" value="1"/>
</dbReference>
<dbReference type="Gene3D" id="1.10.1070.11">
    <property type="entry name" value="Phosphatidylinositol 3-/4-kinase, catalytic domain"/>
    <property type="match status" value="1"/>
</dbReference>
<dbReference type="Gene3D" id="3.30.1010.10">
    <property type="entry name" value="Phosphatidylinositol 3-kinase Catalytic Subunit, Chain A, domain 4"/>
    <property type="match status" value="1"/>
</dbReference>
<dbReference type="Gene3D" id="1.25.40.70">
    <property type="entry name" value="Phosphatidylinositol 3-kinase, accessory domain (PIK)"/>
    <property type="match status" value="1"/>
</dbReference>
<dbReference type="InterPro" id="IPR016024">
    <property type="entry name" value="ARM-type_fold"/>
</dbReference>
<dbReference type="InterPro" id="IPR035892">
    <property type="entry name" value="C2_domain_sf"/>
</dbReference>
<dbReference type="InterPro" id="IPR011009">
    <property type="entry name" value="Kinase-like_dom_sf"/>
</dbReference>
<dbReference type="InterPro" id="IPR000403">
    <property type="entry name" value="PI3/4_kinase_cat_dom"/>
</dbReference>
<dbReference type="InterPro" id="IPR036940">
    <property type="entry name" value="PI3/4_kinase_cat_sf"/>
</dbReference>
<dbReference type="InterPro" id="IPR018936">
    <property type="entry name" value="PI3/4_kinase_CS"/>
</dbReference>
<dbReference type="InterPro" id="IPR002420">
    <property type="entry name" value="PI3K-type_C2_dom"/>
</dbReference>
<dbReference type="InterPro" id="IPR003113">
    <property type="entry name" value="PI3K_ABD"/>
</dbReference>
<dbReference type="InterPro" id="IPR001263">
    <property type="entry name" value="PI3K_accessory_dom"/>
</dbReference>
<dbReference type="InterPro" id="IPR042236">
    <property type="entry name" value="PI3K_accessory_sf"/>
</dbReference>
<dbReference type="InterPro" id="IPR000341">
    <property type="entry name" value="PI3K_Ras-bd_dom"/>
</dbReference>
<dbReference type="InterPro" id="IPR037702">
    <property type="entry name" value="PI3Kbeta_dom"/>
</dbReference>
<dbReference type="InterPro" id="IPR015433">
    <property type="entry name" value="PI_Kinase"/>
</dbReference>
<dbReference type="InterPro" id="IPR029071">
    <property type="entry name" value="Ubiquitin-like_domsf"/>
</dbReference>
<dbReference type="PANTHER" id="PTHR10048:SF33">
    <property type="entry name" value="PHOSPHATIDYLINOSITOL 4,5-BISPHOSPHATE 3-KINASE CATALYTIC SUBUNIT BETA ISOFORM"/>
    <property type="match status" value="1"/>
</dbReference>
<dbReference type="PANTHER" id="PTHR10048">
    <property type="entry name" value="PHOSPHATIDYLINOSITOL KINASE"/>
    <property type="match status" value="1"/>
</dbReference>
<dbReference type="Pfam" id="PF00454">
    <property type="entry name" value="PI3_PI4_kinase"/>
    <property type="match status" value="1"/>
</dbReference>
<dbReference type="Pfam" id="PF00792">
    <property type="entry name" value="PI3K_C2"/>
    <property type="match status" value="1"/>
</dbReference>
<dbReference type="Pfam" id="PF02192">
    <property type="entry name" value="PI3K_p85B"/>
    <property type="match status" value="1"/>
</dbReference>
<dbReference type="Pfam" id="PF00794">
    <property type="entry name" value="PI3K_rbd"/>
    <property type="match status" value="1"/>
</dbReference>
<dbReference type="Pfam" id="PF00613">
    <property type="entry name" value="PI3Ka"/>
    <property type="match status" value="1"/>
</dbReference>
<dbReference type="SMART" id="SM00142">
    <property type="entry name" value="PI3K_C2"/>
    <property type="match status" value="1"/>
</dbReference>
<dbReference type="SMART" id="SM00143">
    <property type="entry name" value="PI3K_p85B"/>
    <property type="match status" value="1"/>
</dbReference>
<dbReference type="SMART" id="SM00144">
    <property type="entry name" value="PI3K_rbd"/>
    <property type="match status" value="1"/>
</dbReference>
<dbReference type="SMART" id="SM00145">
    <property type="entry name" value="PI3Ka"/>
    <property type="match status" value="1"/>
</dbReference>
<dbReference type="SMART" id="SM00146">
    <property type="entry name" value="PI3Kc"/>
    <property type="match status" value="1"/>
</dbReference>
<dbReference type="SUPFAM" id="SSF48371">
    <property type="entry name" value="ARM repeat"/>
    <property type="match status" value="1"/>
</dbReference>
<dbReference type="SUPFAM" id="SSF49562">
    <property type="entry name" value="C2 domain (Calcium/lipid-binding domain, CaLB)"/>
    <property type="match status" value="1"/>
</dbReference>
<dbReference type="SUPFAM" id="SSF56112">
    <property type="entry name" value="Protein kinase-like (PK-like)"/>
    <property type="match status" value="1"/>
</dbReference>
<dbReference type="SUPFAM" id="SSF54236">
    <property type="entry name" value="Ubiquitin-like"/>
    <property type="match status" value="1"/>
</dbReference>
<dbReference type="PROSITE" id="PS51547">
    <property type="entry name" value="C2_PI3K"/>
    <property type="match status" value="1"/>
</dbReference>
<dbReference type="PROSITE" id="PS00915">
    <property type="entry name" value="PI3_4_KINASE_1"/>
    <property type="match status" value="1"/>
</dbReference>
<dbReference type="PROSITE" id="PS00916">
    <property type="entry name" value="PI3_4_KINASE_2"/>
    <property type="match status" value="1"/>
</dbReference>
<dbReference type="PROSITE" id="PS50290">
    <property type="entry name" value="PI3_4_KINASE_3"/>
    <property type="match status" value="1"/>
</dbReference>
<dbReference type="PROSITE" id="PS51544">
    <property type="entry name" value="PI3K_ABD"/>
    <property type="match status" value="1"/>
</dbReference>
<dbReference type="PROSITE" id="PS51546">
    <property type="entry name" value="PI3K_RBD"/>
    <property type="match status" value="1"/>
</dbReference>
<dbReference type="PROSITE" id="PS51545">
    <property type="entry name" value="PIK_HELICAL"/>
    <property type="match status" value="1"/>
</dbReference>
<proteinExistence type="evidence at protein level"/>
<accession>P42338</accession>
<accession>D3DNF0</accession>
<accession>Q24JU2</accession>
<organism>
    <name type="scientific">Homo sapiens</name>
    <name type="common">Human</name>
    <dbReference type="NCBI Taxonomy" id="9606"/>
    <lineage>
        <taxon>Eukaryota</taxon>
        <taxon>Metazoa</taxon>
        <taxon>Chordata</taxon>
        <taxon>Craniata</taxon>
        <taxon>Vertebrata</taxon>
        <taxon>Euteleostomi</taxon>
        <taxon>Mammalia</taxon>
        <taxon>Eutheria</taxon>
        <taxon>Euarchontoglires</taxon>
        <taxon>Primates</taxon>
        <taxon>Haplorrhini</taxon>
        <taxon>Catarrhini</taxon>
        <taxon>Hominidae</taxon>
        <taxon>Homo</taxon>
    </lineage>
</organism>
<comment type="function">
    <text evidence="8 9 10 11 12 13">Phosphoinositide-3-kinase (PI3K) phosphorylates phosphatidylinositol derivatives at position 3 of the inositol ring to produce 3-phosphoinositides (PubMed:15135396). Uses ATP and PtdIns(4,5)P2 (phosphatidylinositol 4,5-bisphosphate) to generate phosphatidylinositol 3,4,5-trisphosphate (PIP3) (PubMed:15135396). PIP3 plays a key role by recruiting PH domain-containing proteins to the membrane, including AKT1 and PDPK1, activating signaling cascades involved in cell growth, survival, proliferation, motility and morphology. Involved in the activation of AKT1 upon stimulation by G-protein coupled receptors (GPCRs) ligands such as CXCL12, sphingosine 1-phosphate, and lysophosphatidic acid. May also act downstream receptor tyrosine kinases. Required in different signaling pathways for stable platelet adhesion and aggregation. Plays a role in platelet activation signaling triggered by GPCRs, alpha-IIb/beta-3 integrins (ITGA2B/ ITGB3) and ITAM (immunoreceptor tyrosine-based activation motif)-bearing receptors such as GP6. Regulates the strength of adhesion of ITGA2B/ ITGB3 activated receptors necessary for the cellular transmission of contractile forces. Required for platelet aggregation induced by F2 (thrombin) and thromboxane A2 (TXA2). Has a role in cell survival. May have a role in cell migration. Involved in the early stage of autophagosome formation. Modulates the intracellular level of PtdIns3P (phosphatidylinositol 3-phosphate) and activates PIK3C3 kinase activity. May act as a scaffold, independently of its lipid kinase activity to positively regulate autophagy. May have a role in insulin signaling as scaffolding protein in which the lipid kinase activity is not required. May have a kinase-independent function in regulating cell proliferation and in clathrin-mediated endocytosis. Mediator of oncogenic signal in cell lines lacking PTEN. The lipid kinase activity is necessary for its role in oncogenic transformation. Required for the growth of ERBB2 and RAS driven tumors. Also has a protein kinase activity showing autophosphorylation (PubMed:12502714).</text>
</comment>
<comment type="catalytic activity">
    <reaction evidence="8 9">
        <text>a 1,2-diacyl-sn-glycero-3-phospho-(1D-myo-inositol-4,5-bisphosphate) + ATP = a 1,2-diacyl-sn-glycero-3-phospho-(1D-myo-inositol-3,4,5-trisphosphate) + ADP + H(+)</text>
        <dbReference type="Rhea" id="RHEA:21292"/>
        <dbReference type="ChEBI" id="CHEBI:15378"/>
        <dbReference type="ChEBI" id="CHEBI:30616"/>
        <dbReference type="ChEBI" id="CHEBI:57836"/>
        <dbReference type="ChEBI" id="CHEBI:58456"/>
        <dbReference type="ChEBI" id="CHEBI:456216"/>
        <dbReference type="EC" id="2.7.1.153"/>
    </reaction>
    <physiologicalReaction direction="left-to-right" evidence="16">
        <dbReference type="Rhea" id="RHEA:21293"/>
    </physiologicalReaction>
</comment>
<comment type="catalytic activity">
    <reaction evidence="16">
        <text>1-octadecanoyl-2-(5Z,8Z,11Z,14Z)-eicosatetraenoyl-sn-glycero-3-phospho-1D-myo-inositol 4,5-bisphosphate + ATP = 1-octadecanoyl-2-(5Z,8Z,11Z,14Z-eicosatetraenoyl)-sn-glycero-3-phospho-(1D-myo-inositol 3,4,5-triphosphate) + ADP + H(+)</text>
        <dbReference type="Rhea" id="RHEA:43396"/>
        <dbReference type="ChEBI" id="CHEBI:15378"/>
        <dbReference type="ChEBI" id="CHEBI:30616"/>
        <dbReference type="ChEBI" id="CHEBI:77137"/>
        <dbReference type="ChEBI" id="CHEBI:83243"/>
        <dbReference type="ChEBI" id="CHEBI:456216"/>
    </reaction>
    <physiologicalReaction direction="left-to-right" evidence="16">
        <dbReference type="Rhea" id="RHEA:43397"/>
    </physiologicalReaction>
</comment>
<comment type="catalytic activity">
    <reaction evidence="8">
        <text>L-seryl-[protein] + ATP = O-phospho-L-seryl-[protein] + ADP + H(+)</text>
        <dbReference type="Rhea" id="RHEA:17989"/>
        <dbReference type="Rhea" id="RHEA-COMP:9863"/>
        <dbReference type="Rhea" id="RHEA-COMP:11604"/>
        <dbReference type="ChEBI" id="CHEBI:15378"/>
        <dbReference type="ChEBI" id="CHEBI:29999"/>
        <dbReference type="ChEBI" id="CHEBI:30616"/>
        <dbReference type="ChEBI" id="CHEBI:83421"/>
        <dbReference type="ChEBI" id="CHEBI:456216"/>
        <dbReference type="EC" id="2.7.11.1"/>
    </reaction>
    <physiologicalReaction direction="left-to-right" evidence="15">
        <dbReference type="Rhea" id="RHEA:17990"/>
    </physiologicalReaction>
</comment>
<comment type="pathway">
    <text evidence="16">Phospholipid metabolism; phosphatidylinositol phosphate biosynthesis.</text>
</comment>
<comment type="subunit">
    <text evidence="1">Heterodimer of a catalytic subunit PIK3CB and a p85 regulatory subunit (PIK3R1, PIK3R2 or PIK3R3). Interaction with PIK3R2 is required for nuclear localization and nuclear export. Part of a complex with PIK3R1 and PTEN. Binding to PTEN may antagonize the lipid kinase activity under normal growth conditions. Part of a complex involved in autophagosome formation composed of PIK3C3 and PIK3R4 (By similarity). Interacts with BECN1, ATG14 and RAB5A (By similarity).</text>
</comment>
<comment type="interaction">
    <interactant intactId="EBI-2609540">
        <id>P42338</id>
    </interactant>
    <interactant intactId="EBI-77613">
        <id>P05067</id>
        <label>APP</label>
    </interactant>
    <organismsDiffer>false</organismsDiffer>
    <experiments>3</experiments>
</comment>
<comment type="interaction">
    <interactant intactId="EBI-2609540">
        <id>P42338</id>
    </interactant>
    <interactant intactId="EBI-79464">
        <id>P27986</id>
        <label>PIK3R1</label>
    </interactant>
    <organismsDiffer>false</organismsDiffer>
    <experiments>6</experiments>
</comment>
<comment type="interaction">
    <interactant intactId="EBI-2609540">
        <id>P42338</id>
    </interactant>
    <interactant intactId="EBI-9090282">
        <id>P27986-2</id>
        <label>PIK3R1</label>
    </interactant>
    <organismsDiffer>false</organismsDiffer>
    <experiments>6</experiments>
</comment>
<comment type="interaction">
    <interactant intactId="EBI-2609540">
        <id>P42338</id>
    </interactant>
    <interactant intactId="EBI-346930">
        <id>O00459</id>
        <label>PIK3R2</label>
    </interactant>
    <organismsDiffer>false</organismsDiffer>
    <experiments>7</experiments>
</comment>
<comment type="interaction">
    <interactant intactId="EBI-2609540">
        <id>P42338</id>
    </interactant>
    <interactant intactId="EBI-79893">
        <id>Q92569</id>
        <label>PIK3R3</label>
    </interactant>
    <organismsDiffer>false</organismsDiffer>
    <experiments>5</experiments>
</comment>
<comment type="subcellular location">
    <subcellularLocation>
        <location evidence="13">Cytoplasm</location>
    </subcellularLocation>
    <subcellularLocation>
        <location evidence="13">Nucleus</location>
    </subcellularLocation>
    <text>Interaction with PIK3R2 is required for nuclear localization and export.</text>
</comment>
<comment type="tissue specificity">
    <text>Expressed ubiquitously.</text>
</comment>
<comment type="domain">
    <text>The inhibitory interactions with PIK3R1 are mediated by the PI3K-ABD domain and the C2 PI3K-type domain with the iSH2 (inter-SH2) region of PIK3R1; the C2 PI3K-type domain, the PI3K helical domain, and the PI3K/PI4K kinase domain with the nSH2 (N-terminal SH2) region of PIK3R1; and the PI3K/PI4K kinase domain with the cSH2 (C-terminal SH2) region of PIK3R1. The inhibitory interaction between the PI3K-ABD domain and the C2 PI3K-type domain with the iSH2 (inter-SH2) region of PIK3R1 is weak. The nuclear localization signal (NLS) is required for its function in cell survival.</text>
</comment>
<comment type="PTM">
    <text evidence="8">Autophosphorylation at Ser-1070 negatively regulates the phosphatidylinositol-4,5-bisphosphate 3-kinase activity.</text>
</comment>
<comment type="similarity">
    <text evidence="4 6 7">Belongs to the PI3/PI4-kinase family.</text>
</comment>
<gene>
    <name type="primary">PIK3CB</name>
    <name type="synonym">PIK3C1</name>
</gene>
<sequence length="1070" mass="122762">MCFSFIMPPAMADILDIWAVDSQIASDGSIPVDFLLPTGIYIQLEVPREATISYIKQMLWKQVHNYPMFNLLMDIDSYMFACVNQTAVYEELEDETRRLCDVRPFLPVLKLVTRSCDPGEKLDSKIGVLIGKGLHEFDSLKDPEVNEFRRKMRKFSEEKILSLVGLSWMDWLKQTYPPEHEPSIPENLEDKLYGGKLIVAVHFENCQDVFSFQVSPNMNPIKVNELAIQKRLTIHGKEDEVSPYDYVLQVSGRVEYVFGDHPLIQFQYIRNCVMNRALPHFILVECCKIKKMYEQEMIAIEAAINRNSSNLPLPLPPKKTRIISHVWENNNPFQIVLVKGNKLNTEETVKVHVRAGLFHGTELLCKTIVSSEVSGKNDHIWNEPLEFDINICDLPRMARLCFAVYAVLDKVKTKKSTKTINPSKYQTIRKAGKVHYPVAWVNTMVFDFKGQLRTGDIILHSWSSFPDELEEMLNPMGTVQTNPYTENATALHVKFPENKKQPYYYPPFDKIIEKAAEIASSDSANVSSRGGKKFLPVLKEILDRDPLSQLCENEMDLIWTLRQDCREIFPQSLPKLLLSIKWNKLEDVAQLQALLQIWPKLPPREALELLDFNYPDQYVREYAVGCLRQMSDEELSQYLLQLVQVLKYEPFLDCALSRFLLERALGNRRIGQFLFWHLRSEVHIPAVSVQFGVILEAYCRGSVGHMKVLSKQVEALNKLKTLNSLIKLNAVKLNRAKGKEAMHTCLKQSAYREALSDLQSPLNPCVILSELYVEKCKYMDSKMKPLWLVYNNKVFGEDSVGVIFKNGDDLRQDMLTLQMLRLMDLLWKEAGLDLRMLPYGCLATGDRSGLIEVVSTSETIADIQLNSSNVAAAAAFNKDALLNWLKEYNSGDDLDRAIEEFTLSCAGYCVASYVLGIGDRHSDNIMVKKTGQLFHIDFGHILGNFKSKFGIKRERVPFILTYDFIHVIQQGKTGNTEKFGRFRQCCEDAYLILRRHGNLFITLFALMLTAGLPELTSVKDIQYLKDSLALGKSEEEALKQFKQKFDEALRESWTTKVNWMAHTVRKDYRS</sequence>
<name>PK3CB_HUMAN</name>
<protein>
    <recommendedName>
        <fullName>Phosphatidylinositol 4,5-bisphosphate 3-kinase catalytic subunit beta isoform</fullName>
        <shortName>PI3-kinase subunit beta</shortName>
        <shortName>PI3K-beta</shortName>
        <shortName>PI3Kbeta</shortName>
        <shortName>PtdIns-3-kinase subunit beta</shortName>
        <ecNumber evidence="8 9">2.7.1.153</ecNumber>
    </recommendedName>
    <alternativeName>
        <fullName>Phosphatidylinositol 4,5-bisphosphate 3-kinase 110 kDa catalytic subunit beta</fullName>
        <shortName>PtdIns-3-kinase subunit p110-beta</shortName>
        <shortName evidence="14">p110beta</shortName>
    </alternativeName>
    <alternativeName>
        <fullName evidence="15">Serine/threonine protein kinase PIK3CB</fullName>
        <ecNumber evidence="8">2.7.11.1</ecNumber>
    </alternativeName>
</protein>
<reference key="1">
    <citation type="journal article" date="1993" name="Mol. Cell. Biol.">
        <title>Cloning of a novel, ubiquitously expressed human phosphatidylinositol 3-kinase and identification of its binding site on p85.</title>
        <authorList>
            <person name="Hu P."/>
            <person name="Mondino A."/>
            <person name="Skolnik E.Y."/>
            <person name="Schlessinger J."/>
        </authorList>
    </citation>
    <scope>NUCLEOTIDE SEQUENCE [MRNA]</scope>
</reference>
<reference key="2">
    <citation type="journal article" date="2000" name="Diabetes">
        <title>Gene encoding the catalytic subunit p110beta of human phosphatidylinositol 3-kinase: cloning, genomic structure, and screening for variants in patients with type 2 diabetes.</title>
        <authorList>
            <person name="Kossila M."/>
            <person name="Sinkovic M."/>
            <person name="Karkkainen P."/>
            <person name="Laukkanen M.O."/>
            <person name="Miettinen R."/>
            <person name="Rissanen J."/>
            <person name="Kekalainen P."/>
            <person name="Kuusisto J."/>
            <person name="Yla-Herttuala S."/>
            <person name="Laakso M."/>
        </authorList>
    </citation>
    <scope>NUCLEOTIDE SEQUENCE [GENOMIC DNA]</scope>
</reference>
<reference key="3">
    <citation type="submission" date="2005-09" db="EMBL/GenBank/DDBJ databases">
        <authorList>
            <person name="Mural R.J."/>
            <person name="Istrail S."/>
            <person name="Sutton G.G."/>
            <person name="Florea L."/>
            <person name="Halpern A.L."/>
            <person name="Mobarry C.M."/>
            <person name="Lippert R."/>
            <person name="Walenz B."/>
            <person name="Shatkay H."/>
            <person name="Dew I."/>
            <person name="Miller J.R."/>
            <person name="Flanigan M.J."/>
            <person name="Edwards N.J."/>
            <person name="Bolanos R."/>
            <person name="Fasulo D."/>
            <person name="Halldorsson B.V."/>
            <person name="Hannenhalli S."/>
            <person name="Turner R."/>
            <person name="Yooseph S."/>
            <person name="Lu F."/>
            <person name="Nusskern D.R."/>
            <person name="Shue B.C."/>
            <person name="Zheng X.H."/>
            <person name="Zhong F."/>
            <person name="Delcher A.L."/>
            <person name="Huson D.H."/>
            <person name="Kravitz S.A."/>
            <person name="Mouchard L."/>
            <person name="Reinert K."/>
            <person name="Remington K.A."/>
            <person name="Clark A.G."/>
            <person name="Waterman M.S."/>
            <person name="Eichler E.E."/>
            <person name="Adams M.D."/>
            <person name="Hunkapiller M.W."/>
            <person name="Myers E.W."/>
            <person name="Venter J.C."/>
        </authorList>
    </citation>
    <scope>NUCLEOTIDE SEQUENCE [LARGE SCALE GENOMIC DNA]</scope>
</reference>
<reference key="4">
    <citation type="journal article" date="2004" name="Genome Res.">
        <title>The status, quality, and expansion of the NIH full-length cDNA project: the Mammalian Gene Collection (MGC).</title>
        <authorList>
            <consortium name="The MGC Project Team"/>
        </authorList>
    </citation>
    <scope>NUCLEOTIDE SEQUENCE [LARGE SCALE MRNA]</scope>
</reference>
<reference key="5">
    <citation type="journal article" date="2003" name="J. Biol. Chem.">
        <title>Identification and characterization of the autophosphorylation sites of phosphoinositide 3-kinase isoforms beta and gamma.</title>
        <authorList>
            <person name="Czupalla C."/>
            <person name="Culo M."/>
            <person name="Muller E.C."/>
            <person name="Brock C."/>
            <person name="Reusch H.P."/>
            <person name="Spicher K."/>
            <person name="Krause E."/>
            <person name="Nurnberg B."/>
        </authorList>
    </citation>
    <scope>CATALYTIC ACTIVITY</scope>
    <scope>PHOSPHORYLATION AT SER-1070</scope>
    <scope>MUTAGENESIS OF SER-1070</scope>
</reference>
<reference key="6">
    <citation type="journal article" date="2004" name="Protein Expr. Purif.">
        <title>Cloning, expression, purification, and characterization of the human Class Ia phosphoinositide 3-kinase isoforms.</title>
        <authorList>
            <person name="Meier T.I."/>
            <person name="Cook J.A."/>
            <person name="Thomas J.E."/>
            <person name="Radding J.A."/>
            <person name="Horn C."/>
            <person name="Lingaraj T."/>
            <person name="Smith M.C."/>
        </authorList>
    </citation>
    <scope>FUNCTION</scope>
    <scope>CATALYTIC ACTIVITY</scope>
</reference>
<reference key="7">
    <citation type="journal article" date="2008" name="Nature">
        <title>Essential roles of PI(3)K-p110beta in cell growth, metabolism and tumorigenesis.</title>
        <authorList>
            <person name="Jia S."/>
            <person name="Liu Z."/>
            <person name="Zhang S."/>
            <person name="Liu P."/>
            <person name="Zhang L."/>
            <person name="Lee S.H."/>
            <person name="Zhang J."/>
            <person name="Signoretti S."/>
            <person name="Loda M."/>
            <person name="Roberts T.M."/>
            <person name="Zhao J.J."/>
        </authorList>
    </citation>
    <scope>FUNCTION</scope>
    <scope>MUTAGENESIS OF LYS-805</scope>
</reference>
<reference key="8">
    <citation type="journal article" date="2008" name="Proc. Natl. Acad. Sci. U.S.A.">
        <title>PTEN-deficient cancers depend on PIK3CB.</title>
        <authorList>
            <person name="Wee S."/>
            <person name="Wiederschain D."/>
            <person name="Maira S.-M."/>
            <person name="Loo A."/>
            <person name="Miller C."/>
            <person name="deBeaumont R."/>
            <person name="Stegmeier F."/>
            <person name="Yao Y.-M."/>
            <person name="Lengauer C."/>
        </authorList>
    </citation>
    <scope>FUNCTION IN ONCOGENIC SIGNALING</scope>
</reference>
<reference key="9">
    <citation type="journal article" date="2009" name="Mol. Cell. Biol.">
        <title>p85 Associates with unphosphorylated PTEN and the PTEN-associated complex.</title>
        <authorList>
            <person name="Rabinovsky R."/>
            <person name="Pochanard P."/>
            <person name="McNear C."/>
            <person name="Brachmann S.M."/>
            <person name="Duke-Cohan J.S."/>
            <person name="Garraway L.A."/>
            <person name="Sellers W.R."/>
        </authorList>
    </citation>
    <scope>IDENTIFICATION IN A COMPLEX WITH PIK3R1 AND PTEN</scope>
</reference>
<reference key="10">
    <citation type="journal article" date="2010" name="Proc. Natl. Acad. Sci. U.S.A.">
        <title>A biochemical mechanism for the oncogenic potential of the p110beta catalytic subunit of phosphoinositide 3-kinase.</title>
        <authorList>
            <person name="Dbouk H.A."/>
            <person name="Pang H."/>
            <person name="Fiser A."/>
            <person name="Backer J.M."/>
        </authorList>
    </citation>
    <scope>FUNCTION</scope>
    <scope>MUTAGENESIS OF LYS-342</scope>
</reference>
<reference key="11">
    <citation type="journal article" date="2011" name="BMC Syst. Biol.">
        <title>Initial characterization of the human central proteome.</title>
        <authorList>
            <person name="Burkard T.R."/>
            <person name="Planyavsky M."/>
            <person name="Kaupe I."/>
            <person name="Breitwieser F.P."/>
            <person name="Buerckstuemmer T."/>
            <person name="Bennett K.L."/>
            <person name="Superti-Furga G."/>
            <person name="Colinge J."/>
        </authorList>
    </citation>
    <scope>IDENTIFICATION BY MASS SPECTROMETRY [LARGE SCALE ANALYSIS]</scope>
</reference>
<reference key="12">
    <citation type="journal article" date="2011" name="Mol. Cell. Biol.">
        <title>Nuclear but not cytosolic phosphoinositide 3-kinase beta has an essential function in cell survival.</title>
        <authorList>
            <person name="Kumar A."/>
            <person name="Redondo-Munoz J."/>
            <person name="Perez-Garcia V."/>
            <person name="Cortes I."/>
            <person name="Chagoyen M."/>
            <person name="Carrera A.C."/>
        </authorList>
    </citation>
    <scope>FUNCTION</scope>
    <scope>INTERACTION WITH PIK3R2</scope>
    <scope>SUBCELLULAR LOCATION</scope>
    <scope>MOTIF NUCLEAR LOCALIZATION SIGNAL</scope>
</reference>
<reference key="13">
    <citation type="journal article" date="2010" name="Oncotarget">
        <title>A beta version of life: p110beta takes center stage.</title>
        <authorList>
            <person name="Dbouk H.A."/>
            <person name="Backer J.M."/>
        </authorList>
    </citation>
    <scope>REVIEW ON FUNCTION</scope>
</reference>
<reference key="14">
    <citation type="journal article" date="2011" name="Adv. Enzyme Regul.">
        <title>Regulation and roles of PI3Kbeta, a major actor in platelet signaling and functions.</title>
        <authorList>
            <person name="Gratacap M.-P."/>
            <person name="Guillermet-Guibert J."/>
            <person name="Martin V."/>
            <person name="Chicanne G."/>
            <person name="Tronchere H."/>
            <person name="Gaits-Iacovoni F."/>
            <person name="Payrastre B."/>
        </authorList>
    </citation>
    <scope>REVIEW ON FUNCTION</scope>
</reference>